<reference key="1">
    <citation type="journal article" date="2007" name="Nat. Biotechnol.">
        <title>Comparative analysis of the complete genome sequence of the plant growth-promoting bacterium Bacillus amyloliquefaciens FZB42.</title>
        <authorList>
            <person name="Chen X.H."/>
            <person name="Koumoutsi A."/>
            <person name="Scholz R."/>
            <person name="Eisenreich A."/>
            <person name="Schneider K."/>
            <person name="Heinemeyer I."/>
            <person name="Morgenstern B."/>
            <person name="Voss B."/>
            <person name="Hess W.R."/>
            <person name="Reva O."/>
            <person name="Junge H."/>
            <person name="Voigt B."/>
            <person name="Jungblut P.R."/>
            <person name="Vater J."/>
            <person name="Suessmuth R."/>
            <person name="Liesegang H."/>
            <person name="Strittmatter A."/>
            <person name="Gottschalk G."/>
            <person name="Borriss R."/>
        </authorList>
    </citation>
    <scope>NUCLEOTIDE SEQUENCE [LARGE SCALE GENOMIC DNA]</scope>
    <source>
        <strain>DSM 23117 / BGSC 10A6 / LMG 26770 / FZB42</strain>
    </source>
</reference>
<accession>A7Z391</accession>
<gene>
    <name type="ordered locus">RBAM_011030</name>
</gene>
<organism>
    <name type="scientific">Bacillus velezensis (strain DSM 23117 / BGSC 10A6 / LMG 26770 / FZB42)</name>
    <name type="common">Bacillus amyloliquefaciens subsp. plantarum</name>
    <dbReference type="NCBI Taxonomy" id="326423"/>
    <lineage>
        <taxon>Bacteria</taxon>
        <taxon>Bacillati</taxon>
        <taxon>Bacillota</taxon>
        <taxon>Bacilli</taxon>
        <taxon>Bacillales</taxon>
        <taxon>Bacillaceae</taxon>
        <taxon>Bacillus</taxon>
        <taxon>Bacillus amyloliquefaciens group</taxon>
    </lineage>
</organism>
<keyword id="KW-0547">Nucleotide-binding</keyword>
<name>Y1103_BACVZ</name>
<sequence length="163" mass="18250">MAKESSFDIVSKVEFPEVQNAIQMTLKEIGTRYDFKGSKSDVTLEKEELVLISDDEFKLNQLKDVLSGKLIKRDVPTKNIEYGKIENASGGTVRQRAKLVQGIDKDNAKKINAVIKNSGLKVKSQIQDDQVRVTGKNKDDLQQIIAAVRGADLPIDVQFINFR</sequence>
<comment type="function">
    <text evidence="1">Nucleotide-binding protein.</text>
</comment>
<comment type="similarity">
    <text evidence="1">Belongs to the YajQ family.</text>
</comment>
<dbReference type="EMBL" id="CP000560">
    <property type="protein sequence ID" value="ABS73467.1"/>
    <property type="molecule type" value="Genomic_DNA"/>
</dbReference>
<dbReference type="RefSeq" id="WP_012117263.1">
    <property type="nucleotide sequence ID" value="NC_009725.2"/>
</dbReference>
<dbReference type="SMR" id="A7Z391"/>
<dbReference type="GeneID" id="93080240"/>
<dbReference type="KEGG" id="bay:RBAM_011030"/>
<dbReference type="HOGENOM" id="CLU_099839_1_0_9"/>
<dbReference type="Proteomes" id="UP000001120">
    <property type="component" value="Chromosome"/>
</dbReference>
<dbReference type="GO" id="GO:0005829">
    <property type="term" value="C:cytosol"/>
    <property type="evidence" value="ECO:0007669"/>
    <property type="project" value="TreeGrafter"/>
</dbReference>
<dbReference type="GO" id="GO:0000166">
    <property type="term" value="F:nucleotide binding"/>
    <property type="evidence" value="ECO:0007669"/>
    <property type="project" value="TreeGrafter"/>
</dbReference>
<dbReference type="CDD" id="cd11740">
    <property type="entry name" value="YajQ_like"/>
    <property type="match status" value="1"/>
</dbReference>
<dbReference type="FunFam" id="3.30.70.990:FF:000002">
    <property type="entry name" value="UPF0234 protein LEP1GSC067_4943"/>
    <property type="match status" value="1"/>
</dbReference>
<dbReference type="FunFam" id="3.30.70.860:FF:000003">
    <property type="entry name" value="UPF0234 protein YBT020_06460"/>
    <property type="match status" value="1"/>
</dbReference>
<dbReference type="Gene3D" id="3.30.70.860">
    <property type="match status" value="1"/>
</dbReference>
<dbReference type="Gene3D" id="3.30.70.990">
    <property type="entry name" value="YajQ-like, domain 2"/>
    <property type="match status" value="1"/>
</dbReference>
<dbReference type="HAMAP" id="MF_00632">
    <property type="entry name" value="YajQ"/>
    <property type="match status" value="1"/>
</dbReference>
<dbReference type="InterPro" id="IPR007551">
    <property type="entry name" value="DUF520"/>
</dbReference>
<dbReference type="InterPro" id="IPR035571">
    <property type="entry name" value="UPF0234-like_C"/>
</dbReference>
<dbReference type="InterPro" id="IPR035570">
    <property type="entry name" value="UPF0234_N"/>
</dbReference>
<dbReference type="InterPro" id="IPR036183">
    <property type="entry name" value="YajQ-like_sf"/>
</dbReference>
<dbReference type="NCBIfam" id="NF003819">
    <property type="entry name" value="PRK05412.1"/>
    <property type="match status" value="1"/>
</dbReference>
<dbReference type="PANTHER" id="PTHR30476">
    <property type="entry name" value="UPF0234 PROTEIN YAJQ"/>
    <property type="match status" value="1"/>
</dbReference>
<dbReference type="PANTHER" id="PTHR30476:SF0">
    <property type="entry name" value="UPF0234 PROTEIN YAJQ"/>
    <property type="match status" value="1"/>
</dbReference>
<dbReference type="Pfam" id="PF04461">
    <property type="entry name" value="DUF520"/>
    <property type="match status" value="1"/>
</dbReference>
<dbReference type="SUPFAM" id="SSF89963">
    <property type="entry name" value="YajQ-like"/>
    <property type="match status" value="2"/>
</dbReference>
<proteinExistence type="inferred from homology"/>
<feature type="chain" id="PRO_1000082621" description="Nucleotide-binding protein RBAM_011030">
    <location>
        <begin position="1"/>
        <end position="163"/>
    </location>
</feature>
<evidence type="ECO:0000255" key="1">
    <source>
        <dbReference type="HAMAP-Rule" id="MF_00632"/>
    </source>
</evidence>
<protein>
    <recommendedName>
        <fullName evidence="1">Nucleotide-binding protein RBAM_011030</fullName>
    </recommendedName>
</protein>